<organism>
    <name type="scientific">Carlito syrichta</name>
    <name type="common">Philippine tarsier</name>
    <name type="synonym">Tarsius syrichta</name>
    <dbReference type="NCBI Taxonomy" id="1868482"/>
    <lineage>
        <taxon>Eukaryota</taxon>
        <taxon>Metazoa</taxon>
        <taxon>Chordata</taxon>
        <taxon>Craniata</taxon>
        <taxon>Vertebrata</taxon>
        <taxon>Euteleostomi</taxon>
        <taxon>Mammalia</taxon>
        <taxon>Eutheria</taxon>
        <taxon>Euarchontoglires</taxon>
        <taxon>Primates</taxon>
        <taxon>Haplorrhini</taxon>
        <taxon>Tarsiiformes</taxon>
        <taxon>Tarsiidae</taxon>
        <taxon>Carlito</taxon>
    </lineage>
</organism>
<feature type="chain" id="PRO_0000117993" description="NADH-ubiquinone oxidoreductase chain 4">
    <location>
        <begin position="1" status="less than"/>
        <end position="167"/>
    </location>
</feature>
<feature type="transmembrane region" description="Helical" evidence="2">
    <location>
        <begin position="2"/>
        <end position="22"/>
    </location>
</feature>
<feature type="transmembrane region" description="Helical" evidence="2">
    <location>
        <begin position="44"/>
        <end position="64"/>
    </location>
</feature>
<feature type="transmembrane region" description="Helical" evidence="2">
    <location>
        <begin position="86"/>
        <end position="106"/>
    </location>
</feature>
<feature type="non-terminal residue">
    <location>
        <position position="1"/>
    </location>
</feature>
<dbReference type="EC" id="7.1.1.2"/>
<dbReference type="EMBL" id="M22656">
    <property type="protein sequence ID" value="AAA70320.2"/>
    <property type="molecule type" value="Genomic_DNA"/>
</dbReference>
<dbReference type="PIR" id="I77318">
    <property type="entry name" value="I77318"/>
</dbReference>
<dbReference type="SMR" id="Q36150"/>
<dbReference type="STRING" id="1868482.ENSTSYP00000013705"/>
<dbReference type="Proteomes" id="UP000189704">
    <property type="component" value="Mitochondrion MT"/>
</dbReference>
<dbReference type="GO" id="GO:0031966">
    <property type="term" value="C:mitochondrial membrane"/>
    <property type="evidence" value="ECO:0007669"/>
    <property type="project" value="UniProtKB-SubCell"/>
</dbReference>
<dbReference type="GO" id="GO:0008137">
    <property type="term" value="F:NADH dehydrogenase (ubiquinone) activity"/>
    <property type="evidence" value="ECO:0007669"/>
    <property type="project" value="UniProtKB-EC"/>
</dbReference>
<dbReference type="GO" id="GO:0048039">
    <property type="term" value="F:ubiquinone binding"/>
    <property type="evidence" value="ECO:0007669"/>
    <property type="project" value="TreeGrafter"/>
</dbReference>
<dbReference type="GO" id="GO:0042773">
    <property type="term" value="P:ATP synthesis coupled electron transport"/>
    <property type="evidence" value="ECO:0007669"/>
    <property type="project" value="InterPro"/>
</dbReference>
<dbReference type="GO" id="GO:0015990">
    <property type="term" value="P:electron transport coupled proton transport"/>
    <property type="evidence" value="ECO:0007669"/>
    <property type="project" value="TreeGrafter"/>
</dbReference>
<dbReference type="InterPro" id="IPR003918">
    <property type="entry name" value="NADH_UbQ_OxRdtase"/>
</dbReference>
<dbReference type="InterPro" id="IPR001750">
    <property type="entry name" value="ND/Mrp_TM"/>
</dbReference>
<dbReference type="PANTHER" id="PTHR43507">
    <property type="entry name" value="NADH-UBIQUINONE OXIDOREDUCTASE CHAIN 4"/>
    <property type="match status" value="1"/>
</dbReference>
<dbReference type="PANTHER" id="PTHR43507:SF20">
    <property type="entry name" value="NADH-UBIQUINONE OXIDOREDUCTASE CHAIN 4"/>
    <property type="match status" value="1"/>
</dbReference>
<dbReference type="Pfam" id="PF00361">
    <property type="entry name" value="Proton_antipo_M"/>
    <property type="match status" value="1"/>
</dbReference>
<dbReference type="PRINTS" id="PR01437">
    <property type="entry name" value="NUOXDRDTASE4"/>
</dbReference>
<comment type="function">
    <text evidence="1">Core subunit of the mitochondrial membrane respiratory chain NADH dehydrogenase (Complex I) that is believed to belong to the minimal assembly required for catalysis. Complex I functions in the transfer of electrons from NADH to the respiratory chain. The immediate electron acceptor for the enzyme is believed to be ubiquinone (By similarity).</text>
</comment>
<comment type="catalytic activity">
    <reaction>
        <text>a ubiquinone + NADH + 5 H(+)(in) = a ubiquinol + NAD(+) + 4 H(+)(out)</text>
        <dbReference type="Rhea" id="RHEA:29091"/>
        <dbReference type="Rhea" id="RHEA-COMP:9565"/>
        <dbReference type="Rhea" id="RHEA-COMP:9566"/>
        <dbReference type="ChEBI" id="CHEBI:15378"/>
        <dbReference type="ChEBI" id="CHEBI:16389"/>
        <dbReference type="ChEBI" id="CHEBI:17976"/>
        <dbReference type="ChEBI" id="CHEBI:57540"/>
        <dbReference type="ChEBI" id="CHEBI:57945"/>
        <dbReference type="EC" id="7.1.1.2"/>
    </reaction>
</comment>
<comment type="subcellular location">
    <subcellularLocation>
        <location evidence="1">Mitochondrion membrane</location>
        <topology evidence="1">Multi-pass membrane protein</topology>
    </subcellularLocation>
</comment>
<comment type="similarity">
    <text evidence="3">Belongs to the complex I subunit 4 family.</text>
</comment>
<geneLocation type="mitochondrion"/>
<evidence type="ECO:0000250" key="1"/>
<evidence type="ECO:0000255" key="2"/>
<evidence type="ECO:0000305" key="3"/>
<gene>
    <name type="primary">MT-ND4</name>
    <name type="synonym">MTND4</name>
    <name type="synonym">NADH4</name>
    <name type="synonym">ND4</name>
</gene>
<protein>
    <recommendedName>
        <fullName>NADH-ubiquinone oxidoreductase chain 4</fullName>
        <ecNumber>7.1.1.2</ecNumber>
    </recommendedName>
    <alternativeName>
        <fullName>NADH dehydrogenase subunit 4</fullName>
    </alternativeName>
</protein>
<sequence length="167" mass="18731">SFIGATTLMIAHGLTSSLLFCLANTNYERVHSRTMALARGLQTLLPLAATWWLLASLTNLALPPTINLIGELSVMMAAFSWSHLTIILVGLNTLITALYSLYMLIMTQRGKYTYHINNIMPPFTRENTLMIMHLFPLILLSTNPKLIMGTMYCKYSLNKTLDCESNN</sequence>
<name>NU4M_CARSF</name>
<keyword id="KW-0249">Electron transport</keyword>
<keyword id="KW-0472">Membrane</keyword>
<keyword id="KW-0496">Mitochondrion</keyword>
<keyword id="KW-0520">NAD</keyword>
<keyword id="KW-1185">Reference proteome</keyword>
<keyword id="KW-0679">Respiratory chain</keyword>
<keyword id="KW-1278">Translocase</keyword>
<keyword id="KW-0812">Transmembrane</keyword>
<keyword id="KW-1133">Transmembrane helix</keyword>
<keyword id="KW-0813">Transport</keyword>
<keyword id="KW-0830">Ubiquinone</keyword>
<accession>Q36150</accession>
<proteinExistence type="inferred from homology"/>
<reference key="1">
    <citation type="journal article" date="1988" name="Mol. Biol. Evol.">
        <title>Molecular phylogeny and evolution of primate mitochondrial DNA.</title>
        <authorList>
            <person name="Hayasaka K."/>
            <person name="Gojobori T."/>
            <person name="Horai S."/>
        </authorList>
    </citation>
    <scope>NUCLEOTIDE SEQUENCE [GENOMIC DNA]</scope>
</reference>
<reference key="2">
    <citation type="submission" date="2000-08" db="EMBL/GenBank/DDBJ databases">
        <authorList>
            <person name="Hayasaka K."/>
            <person name="Gojobori T."/>
            <person name="Horai S."/>
        </authorList>
    </citation>
    <scope>SEQUENCE REVISION TO C-TERMINUS</scope>
</reference>